<comment type="similarity">
    <text evidence="1">Belongs to the BolA/IbaG family.</text>
</comment>
<name>Y348_BUCBP</name>
<proteinExistence type="inferred from homology"/>
<protein>
    <recommendedName>
        <fullName>Uncharacterized protein bbp_348</fullName>
    </recommendedName>
</protein>
<reference key="1">
    <citation type="journal article" date="2003" name="Proc. Natl. Acad. Sci. U.S.A.">
        <title>Reductive genome evolution in Buchnera aphidicola.</title>
        <authorList>
            <person name="van Ham R.C.H.J."/>
            <person name="Kamerbeek J."/>
            <person name="Palacios C."/>
            <person name="Rausell C."/>
            <person name="Abascal F."/>
            <person name="Bastolla U."/>
            <person name="Fernandez J.M."/>
            <person name="Jimenez L."/>
            <person name="Postigo M."/>
            <person name="Silva F.J."/>
            <person name="Tamames J."/>
            <person name="Viguera E."/>
            <person name="Latorre A."/>
            <person name="Valencia A."/>
            <person name="Moran F."/>
            <person name="Moya A."/>
        </authorList>
    </citation>
    <scope>NUCLEOTIDE SEQUENCE [LARGE SCALE GENOMIC DNA]</scope>
    <source>
        <strain>Bp</strain>
    </source>
</reference>
<keyword id="KW-1185">Reference proteome</keyword>
<sequence>MTITNTIKSLLKKKIPLTVIHVTGDNKHINITAVSDIFNNINTLRRQQIIYKPLMPYIINKTLHAISIKTYSLQEWKNK</sequence>
<evidence type="ECO:0000305" key="1"/>
<organism>
    <name type="scientific">Buchnera aphidicola subsp. Baizongia pistaciae (strain Bp)</name>
    <dbReference type="NCBI Taxonomy" id="224915"/>
    <lineage>
        <taxon>Bacteria</taxon>
        <taxon>Pseudomonadati</taxon>
        <taxon>Pseudomonadota</taxon>
        <taxon>Gammaproteobacteria</taxon>
        <taxon>Enterobacterales</taxon>
        <taxon>Erwiniaceae</taxon>
        <taxon>Buchnera</taxon>
    </lineage>
</organism>
<feature type="chain" id="PRO_0000201226" description="Uncharacterized protein bbp_348">
    <location>
        <begin position="1"/>
        <end position="79"/>
    </location>
</feature>
<dbReference type="EMBL" id="AE016826">
    <property type="protein sequence ID" value="AAO27067.1"/>
    <property type="molecule type" value="Genomic_DNA"/>
</dbReference>
<dbReference type="RefSeq" id="WP_011091468.1">
    <property type="nucleotide sequence ID" value="NC_004545.1"/>
</dbReference>
<dbReference type="SMR" id="Q89AF0"/>
<dbReference type="STRING" id="224915.bbp_348"/>
<dbReference type="KEGG" id="bab:bbp_348"/>
<dbReference type="eggNOG" id="COG5007">
    <property type="taxonomic scope" value="Bacteria"/>
</dbReference>
<dbReference type="HOGENOM" id="CLU_109462_4_1_6"/>
<dbReference type="OrthoDB" id="9812890at2"/>
<dbReference type="Proteomes" id="UP000000601">
    <property type="component" value="Chromosome"/>
</dbReference>
<dbReference type="Gene3D" id="3.30.300.90">
    <property type="entry name" value="BolA-like"/>
    <property type="match status" value="1"/>
</dbReference>
<dbReference type="InterPro" id="IPR002634">
    <property type="entry name" value="BolA"/>
</dbReference>
<dbReference type="InterPro" id="IPR036065">
    <property type="entry name" value="BolA-like_sf"/>
</dbReference>
<dbReference type="InterPro" id="IPR050961">
    <property type="entry name" value="BolA/IbaG_stress_morph_reg"/>
</dbReference>
<dbReference type="PANTHER" id="PTHR46229:SF4">
    <property type="entry name" value="ACID STRESS PROTEIN IBAG"/>
    <property type="match status" value="1"/>
</dbReference>
<dbReference type="PANTHER" id="PTHR46229">
    <property type="entry name" value="BOLA TRANSCRIPTION REGULATOR"/>
    <property type="match status" value="1"/>
</dbReference>
<dbReference type="Pfam" id="PF01722">
    <property type="entry name" value="BolA"/>
    <property type="match status" value="1"/>
</dbReference>
<dbReference type="PIRSF" id="PIRSF003113">
    <property type="entry name" value="BolA"/>
    <property type="match status" value="1"/>
</dbReference>
<dbReference type="SUPFAM" id="SSF82657">
    <property type="entry name" value="BolA-like"/>
    <property type="match status" value="1"/>
</dbReference>
<accession>Q89AF0</accession>
<gene>
    <name type="ordered locus">bbp_348</name>
</gene>